<name>QCR10_NEUCR</name>
<proteinExistence type="evidence at protein level"/>
<gene>
    <name type="ORF">NCU16844</name>
</gene>
<dbReference type="EMBL" id="CM002239">
    <property type="protein sequence ID" value="ESA42999.1"/>
    <property type="molecule type" value="Genomic_DNA"/>
</dbReference>
<dbReference type="RefSeq" id="XP_011394420.1">
    <property type="nucleotide sequence ID" value="XM_011396118.1"/>
</dbReference>
<dbReference type="SMR" id="V5IP95"/>
<dbReference type="STRING" id="367110.V5IP95"/>
<dbReference type="PaxDb" id="5141-EFNCRP00000007133"/>
<dbReference type="EnsemblFungi" id="ESA42999">
    <property type="protein sequence ID" value="ESA42999"/>
    <property type="gene ID" value="NCU16844"/>
</dbReference>
<dbReference type="GeneID" id="23569684"/>
<dbReference type="KEGG" id="ncr:NCU16844"/>
<dbReference type="VEuPathDB" id="FungiDB:NCU16844"/>
<dbReference type="InParanoid" id="V5IP95"/>
<dbReference type="OrthoDB" id="2391627at2759"/>
<dbReference type="Proteomes" id="UP000001805">
    <property type="component" value="Chromosome 4, Linkage Group IV"/>
</dbReference>
<dbReference type="GO" id="GO:0005743">
    <property type="term" value="C:mitochondrial inner membrane"/>
    <property type="evidence" value="ECO:0007669"/>
    <property type="project" value="UniProtKB-SubCell"/>
</dbReference>
<dbReference type="GO" id="GO:0006122">
    <property type="term" value="P:mitochondrial electron transport, ubiquinol to cytochrome c"/>
    <property type="evidence" value="ECO:0000318"/>
    <property type="project" value="GO_Central"/>
</dbReference>
<dbReference type="Gene3D" id="1.20.5.220">
    <property type="match status" value="1"/>
</dbReference>
<dbReference type="InterPro" id="IPR019182">
    <property type="entry name" value="Cytochrome_b-c1_su10_fun"/>
</dbReference>
<dbReference type="PANTHER" id="PTHR28254">
    <property type="entry name" value="CYTOCHROME B-C1 COMPLEX SUBUNIT 10"/>
    <property type="match status" value="1"/>
</dbReference>
<dbReference type="PANTHER" id="PTHR28254:SF1">
    <property type="entry name" value="CYTOCHROME B-C1 COMPLEX SUBUNIT 10, MITOCHONDRIAL"/>
    <property type="match status" value="1"/>
</dbReference>
<dbReference type="Pfam" id="PF09796">
    <property type="entry name" value="QCR10"/>
    <property type="match status" value="1"/>
</dbReference>
<feature type="chain" id="PRO_0000449194" description="Cytochrome b-c1 complex subunit 10, mitochondrial">
    <location>
        <begin position="1"/>
        <end position="91"/>
    </location>
</feature>
<feature type="topological domain" description="Mitochondrial matrix" evidence="1">
    <location>
        <begin position="1"/>
        <end position="34"/>
    </location>
</feature>
<feature type="transmembrane region" description="Helical" evidence="1">
    <location>
        <begin position="35"/>
        <end position="58"/>
    </location>
</feature>
<feature type="topological domain" description="Mitochondrial intermembrane" evidence="1">
    <location>
        <begin position="59"/>
        <end position="91"/>
    </location>
</feature>
<keyword id="KW-0249">Electron transport</keyword>
<keyword id="KW-0472">Membrane</keyword>
<keyword id="KW-0496">Mitochondrion</keyword>
<keyword id="KW-0999">Mitochondrion inner membrane</keyword>
<keyword id="KW-1185">Reference proteome</keyword>
<keyword id="KW-0679">Respiratory chain</keyword>
<keyword id="KW-0812">Transmembrane</keyword>
<keyword id="KW-1133">Transmembrane helix</keyword>
<keyword id="KW-0813">Transport</keyword>
<evidence type="ECO:0000250" key="1">
    <source>
        <dbReference type="UniProtKB" id="P37299"/>
    </source>
</evidence>
<evidence type="ECO:0000269" key="2">
    <source>
    </source>
</evidence>
<evidence type="ECO:0000269" key="3">
    <source>
    </source>
</evidence>
<evidence type="ECO:0000269" key="4">
    <source>
    </source>
</evidence>
<evidence type="ECO:0000305" key="5"/>
<evidence type="ECO:0000305" key="6">
    <source>
    </source>
</evidence>
<evidence type="ECO:0000305" key="7">
    <source>
    </source>
</evidence>
<accession>V5IP95</accession>
<sequence length="91" mass="10338">MFATSILRSAYPAYKSPYGPKYQYQPHIDGITPKQLVRILPTAAAWTGVALFAVVYYASGIPRLRRDVLQRIPYLGERYFVNEIPASDNPF</sequence>
<reference key="1">
    <citation type="journal article" date="2003" name="Nature">
        <title>The genome sequence of the filamentous fungus Neurospora crassa.</title>
        <authorList>
            <person name="Galagan J.E."/>
            <person name="Calvo S.E."/>
            <person name="Borkovich K.A."/>
            <person name="Selker E.U."/>
            <person name="Read N.D."/>
            <person name="Jaffe D.B."/>
            <person name="FitzHugh W."/>
            <person name="Ma L.-J."/>
            <person name="Smirnov S."/>
            <person name="Purcell S."/>
            <person name="Rehman B."/>
            <person name="Elkins T."/>
            <person name="Engels R."/>
            <person name="Wang S."/>
            <person name="Nielsen C.B."/>
            <person name="Butler J."/>
            <person name="Endrizzi M."/>
            <person name="Qui D."/>
            <person name="Ianakiev P."/>
            <person name="Bell-Pedersen D."/>
            <person name="Nelson M.A."/>
            <person name="Werner-Washburne M."/>
            <person name="Selitrennikoff C.P."/>
            <person name="Kinsey J.A."/>
            <person name="Braun E.L."/>
            <person name="Zelter A."/>
            <person name="Schulte U."/>
            <person name="Kothe G.O."/>
            <person name="Jedd G."/>
            <person name="Mewes H.-W."/>
            <person name="Staben C."/>
            <person name="Marcotte E."/>
            <person name="Greenberg D."/>
            <person name="Roy A."/>
            <person name="Foley K."/>
            <person name="Naylor J."/>
            <person name="Stange-Thomann N."/>
            <person name="Barrett R."/>
            <person name="Gnerre S."/>
            <person name="Kamal M."/>
            <person name="Kamvysselis M."/>
            <person name="Mauceli E.W."/>
            <person name="Bielke C."/>
            <person name="Rudd S."/>
            <person name="Frishman D."/>
            <person name="Krystofova S."/>
            <person name="Rasmussen C."/>
            <person name="Metzenberg R.L."/>
            <person name="Perkins D.D."/>
            <person name="Kroken S."/>
            <person name="Cogoni C."/>
            <person name="Macino G."/>
            <person name="Catcheside D.E.A."/>
            <person name="Li W."/>
            <person name="Pratt R.J."/>
            <person name="Osmani S.A."/>
            <person name="DeSouza C.P.C."/>
            <person name="Glass N.L."/>
            <person name="Orbach M.J."/>
            <person name="Berglund J.A."/>
            <person name="Voelker R."/>
            <person name="Yarden O."/>
            <person name="Plamann M."/>
            <person name="Seiler S."/>
            <person name="Dunlap J.C."/>
            <person name="Radford A."/>
            <person name="Aramayo R."/>
            <person name="Natvig D.O."/>
            <person name="Alex L.A."/>
            <person name="Mannhaupt G."/>
            <person name="Ebbole D.J."/>
            <person name="Freitag M."/>
            <person name="Paulsen I."/>
            <person name="Sachs M.S."/>
            <person name="Lander E.S."/>
            <person name="Nusbaum C."/>
            <person name="Birren B.W."/>
        </authorList>
    </citation>
    <scope>NUCLEOTIDE SEQUENCE [LARGE SCALE GENOMIC DNA]</scope>
    <source>
        <strain>ATCC 24698 / 74-OR23-1A / CBS 708.71 / DSM 1257 / FGSC 987</strain>
    </source>
</reference>
<reference key="2">
    <citation type="journal article" date="1991" name="Eur. J. Biochem.">
        <title>Regulation of the proton/electron stoichiometry of mitochondrial ubiquinol:cytochrome c reductase by the membrane potential.</title>
        <authorList>
            <person name="Bechmann G."/>
            <person name="Weiss H."/>
        </authorList>
    </citation>
    <scope>FUNCTION OF COMPLEX III</scope>
</reference>
<reference key="3">
    <citation type="journal article" date="1986" name="Eur. J. Biochem.">
        <title>Dimeric ubiquinol:cytochrome c reductase of Neurospora mitochondria contains one cooperative ubiquinone-reduction centre.</title>
        <authorList>
            <person name="Linke P."/>
            <person name="Bechmann G."/>
            <person name="Gothe A."/>
            <person name="Weiss H."/>
        </authorList>
    </citation>
    <scope>FUNCTION OF COMPLEX III</scope>
</reference>
<reference key="4">
    <citation type="journal article" date="2007" name="Eukaryot. Cell">
        <title>Supramolecular organization of the respiratory chain in Neurospora crassa mitochondria.</title>
        <authorList>
            <person name="Marques I."/>
            <person name="Dencher N.A."/>
            <person name="Videira A."/>
            <person name="Krause F."/>
        </authorList>
    </citation>
    <scope>SUBUNIT</scope>
</reference>
<reference key="5">
    <citation type="journal article" date="2009" name="Mol. Microbiol.">
        <title>Effects of mitochondrial complex III disruption in the respiratory chain of Neurospora crassa.</title>
        <authorList>
            <person name="Duarte M."/>
            <person name="Videira A."/>
        </authorList>
    </citation>
    <scope>FUNCTION OF COMPLEX III</scope>
    <scope>SUBUNIT</scope>
</reference>
<protein>
    <recommendedName>
        <fullName evidence="5">Cytochrome b-c1 complex subunit 10, mitochondrial</fullName>
    </recommendedName>
    <alternativeName>
        <fullName>Complex III subunit 10</fullName>
    </alternativeName>
    <alternativeName>
        <fullName>Ubiquinol-cytochrome c oxidoreductase subunit 10</fullName>
    </alternativeName>
</protein>
<comment type="function">
    <text evidence="4 6 7">Component of the ubiquinol-cytochrome c oxidoreductase, a multisubunit transmembrane complex that is part of the mitochondrial electron transport chain which drives oxidative phosphorylation. The respiratory chain contains 3 multisubunit complexes succinate dehydrogenase (complex II, CII), ubiquinol-cytochrome c oxidoreductase (cytochrome b-c1 complex, complex III, CIII) and cytochrome c oxidase (complex IV, CIV), that cooperate to transfer electrons derived from NADH and succinate to molecular oxygen, creating an electrochemical gradient over the inner membrane that drives transmembrane transport and the ATP synthase. The cytochrome b-c1 complex catalyzes electron transfer from ubiquinol to cytochrome c, linking this redox reaction to translocation of protons across the mitochondrial inner membrane, with protons being carried across the membrane as hydrogens on the quinol. In the process called Q cycle, 2 protons are consumed from the matrix, 4 protons are released into the intermembrane space and 2 electrons are passed to cytochrome c.</text>
</comment>
<comment type="subunit">
    <text evidence="2 3 5">Component of the ubiquinol-cytochrome c oxidoreductase (cytochrome b-c1 complex, complex III, CIII), a multisubunit enzyme composed of 10 subunits. The complex is composed of 3 respiratory subunits cytochrome b (cob), cytochrome c1 (cyt-1) and Rieske protein (fes-1), 2 core protein subunits pep and ucr-1, and 5 low-molecular weight protein subunits qcr6, qcr7, qcr8, qcr9 and probably NCU16844/qcr10 (Probable). The complex exists as an obligatory dimer and forms supercomplexes (SCs) in the inner mitochondrial membrane with NADH-ubiquinone oxidoreductase (complex I, CI) and cytochrome c oxidase (complex IV, CIV), resulting in different assemblies (supercomplexes SCI(1)III(2), SCIII(2)IV(1) and SCIII(2)IV(2) as well as higher order I(x)III(y)IV(z) megacomplexes) (PubMed:17873079, PubMed:19239619).</text>
</comment>
<comment type="subcellular location">
    <subcellularLocation>
        <location evidence="1">Mitochondrion inner membrane</location>
        <topology evidence="1">Single-pass membrane protein</topology>
    </subcellularLocation>
</comment>
<comment type="similarity">
    <text evidence="5">Belongs to the UQCR11/QCR10 family.</text>
</comment>
<organism>
    <name type="scientific">Neurospora crassa (strain ATCC 24698 / 74-OR23-1A / CBS 708.71 / DSM 1257 / FGSC 987)</name>
    <dbReference type="NCBI Taxonomy" id="367110"/>
    <lineage>
        <taxon>Eukaryota</taxon>
        <taxon>Fungi</taxon>
        <taxon>Dikarya</taxon>
        <taxon>Ascomycota</taxon>
        <taxon>Pezizomycotina</taxon>
        <taxon>Sordariomycetes</taxon>
        <taxon>Sordariomycetidae</taxon>
        <taxon>Sordariales</taxon>
        <taxon>Sordariaceae</taxon>
        <taxon>Neurospora</taxon>
    </lineage>
</organism>